<feature type="chain" id="PRO_0000127626" description="Selenide, water dikinase">
    <location>
        <begin position="1"/>
        <end position="346"/>
    </location>
</feature>
<feature type="active site" evidence="2">
    <location>
        <position position="16"/>
    </location>
</feature>
<feature type="binding site" description="in other chain" evidence="2">
    <location>
        <position position="19"/>
    </location>
    <ligand>
        <name>ATP</name>
        <dbReference type="ChEBI" id="CHEBI:30616"/>
        <note>ligand shared between dimeric partners</note>
    </ligand>
</feature>
<feature type="binding site" description="in other chain" evidence="2">
    <location>
        <begin position="47"/>
        <end position="49"/>
    </location>
    <ligand>
        <name>ATP</name>
        <dbReference type="ChEBI" id="CHEBI:30616"/>
        <note>ligand shared between dimeric partners</note>
    </ligand>
</feature>
<feature type="binding site" evidence="2">
    <location>
        <position position="50"/>
    </location>
    <ligand>
        <name>Mg(2+)</name>
        <dbReference type="ChEBI" id="CHEBI:18420"/>
    </ligand>
</feature>
<feature type="binding site" description="in other chain" evidence="2">
    <location>
        <position position="67"/>
    </location>
    <ligand>
        <name>ATP</name>
        <dbReference type="ChEBI" id="CHEBI:30616"/>
        <note>ligand shared between dimeric partners</note>
    </ligand>
</feature>
<feature type="binding site" description="in other chain" evidence="2">
    <location>
        <position position="90"/>
    </location>
    <ligand>
        <name>ATP</name>
        <dbReference type="ChEBI" id="CHEBI:30616"/>
        <note>ligand shared between dimeric partners</note>
    </ligand>
</feature>
<feature type="binding site" evidence="2">
    <location>
        <position position="90"/>
    </location>
    <ligand>
        <name>Mg(2+)</name>
        <dbReference type="ChEBI" id="CHEBI:18420"/>
    </ligand>
</feature>
<feature type="binding site" evidence="2">
    <location>
        <begin position="138"/>
        <end position="140"/>
    </location>
    <ligand>
        <name>ATP</name>
        <dbReference type="ChEBI" id="CHEBI:30616"/>
        <note>ligand shared between dimeric partners</note>
    </ligand>
</feature>
<feature type="binding site" evidence="2">
    <location>
        <position position="226"/>
    </location>
    <ligand>
        <name>Mg(2+)</name>
        <dbReference type="ChEBI" id="CHEBI:18420"/>
    </ligand>
</feature>
<feature type="site" description="Important for catalytic activity" evidence="2">
    <location>
        <position position="19"/>
    </location>
</feature>
<feature type="non-standard amino acid" description="Selenocysteine" evidence="1">
    <location>
        <position position="16"/>
    </location>
</feature>
<name>SELD_HAEDU</name>
<sequence length="346" mass="36920">MSDNIRLTQFSHGAGUGCKISPKVLGTILQSELDKFVDPKLLVGNETADDAAVYDIGNGLAIISTTDFFMPIVDDPFDFGRIAATNALSDIFAMGGKPLMAIAILGFPIDKLPAEVAQKIIEGGRFACQQAGIVLAGGHSIHSMEPIFGLAVTGMAAIEHIKRNASATAGCELFLTKPLGIGILTTAEKRGLLTLPHQHLVRDLMCQLNTIGTLLAPLPEMTAMTDITGFGLLGHLSEICQASNVRAEINSHAVKVIDGVEEYVEQGMIPGGTQRNFESYANLVSPLSDRQKAILCDQQTSGGLLIAVEPQAVEKIQQIAQQIGSMLFHIGKLFDRAPDKALIEVN</sequence>
<comment type="function">
    <text evidence="2">Synthesizes selenophosphate from selenide and ATP.</text>
</comment>
<comment type="catalytic activity">
    <reaction evidence="2">
        <text>hydrogenselenide + ATP + H2O = selenophosphate + AMP + phosphate + 2 H(+)</text>
        <dbReference type="Rhea" id="RHEA:18737"/>
        <dbReference type="ChEBI" id="CHEBI:15377"/>
        <dbReference type="ChEBI" id="CHEBI:15378"/>
        <dbReference type="ChEBI" id="CHEBI:16144"/>
        <dbReference type="ChEBI" id="CHEBI:29317"/>
        <dbReference type="ChEBI" id="CHEBI:30616"/>
        <dbReference type="ChEBI" id="CHEBI:43474"/>
        <dbReference type="ChEBI" id="CHEBI:456215"/>
        <dbReference type="EC" id="2.7.9.3"/>
    </reaction>
</comment>
<comment type="cofactor">
    <cofactor evidence="2">
        <name>Mg(2+)</name>
        <dbReference type="ChEBI" id="CHEBI:18420"/>
    </cofactor>
    <text evidence="2">Binds 1 Mg(2+) ion per monomer.</text>
</comment>
<comment type="subunit">
    <text evidence="2">Homodimer.</text>
</comment>
<comment type="similarity">
    <text evidence="2">Belongs to the selenophosphate synthase 1 family. Class I subfamily.</text>
</comment>
<comment type="sequence caution" evidence="3">
    <conflict type="erroneous termination">
        <sequence resource="EMBL-CDS" id="AAP95511"/>
    </conflict>
    <text>Truncated C-terminus.</text>
</comment>
<organism>
    <name type="scientific">Haemophilus ducreyi (strain 35000HP / ATCC 700724)</name>
    <dbReference type="NCBI Taxonomy" id="233412"/>
    <lineage>
        <taxon>Bacteria</taxon>
        <taxon>Pseudomonadati</taxon>
        <taxon>Pseudomonadota</taxon>
        <taxon>Gammaproteobacteria</taxon>
        <taxon>Pasteurellales</taxon>
        <taxon>Pasteurellaceae</taxon>
        <taxon>Haemophilus</taxon>
    </lineage>
</organism>
<protein>
    <recommendedName>
        <fullName evidence="2">Selenide, water dikinase</fullName>
        <ecNumber evidence="2">2.7.9.3</ecNumber>
    </recommendedName>
    <alternativeName>
        <fullName evidence="2">Selenium donor protein</fullName>
    </alternativeName>
    <alternativeName>
        <fullName evidence="2">Selenophosphate synthase</fullName>
    </alternativeName>
</protein>
<gene>
    <name evidence="2" type="primary">selD</name>
    <name type="ordered locus">HD_0577</name>
</gene>
<dbReference type="EC" id="2.7.9.3" evidence="2"/>
<dbReference type="EMBL" id="AE017143">
    <property type="protein sequence ID" value="AAP95511.1"/>
    <property type="status" value="ALT_SEQ"/>
    <property type="molecule type" value="Genomic_DNA"/>
</dbReference>
<dbReference type="RefSeq" id="WP_080502546.1">
    <property type="nucleotide sequence ID" value="NC_002940.2"/>
</dbReference>
<dbReference type="STRING" id="233412.HD_0577"/>
<dbReference type="KEGG" id="hdu:HD_0577"/>
<dbReference type="eggNOG" id="COG0709">
    <property type="taxonomic scope" value="Bacteria"/>
</dbReference>
<dbReference type="HOGENOM" id="CLU_032859_0_1_6"/>
<dbReference type="OrthoDB" id="9767928at2"/>
<dbReference type="Proteomes" id="UP000001022">
    <property type="component" value="Chromosome"/>
</dbReference>
<dbReference type="GO" id="GO:0005737">
    <property type="term" value="C:cytoplasm"/>
    <property type="evidence" value="ECO:0007669"/>
    <property type="project" value="TreeGrafter"/>
</dbReference>
<dbReference type="GO" id="GO:0005524">
    <property type="term" value="F:ATP binding"/>
    <property type="evidence" value="ECO:0007669"/>
    <property type="project" value="UniProtKB-UniRule"/>
</dbReference>
<dbReference type="GO" id="GO:0000287">
    <property type="term" value="F:magnesium ion binding"/>
    <property type="evidence" value="ECO:0007669"/>
    <property type="project" value="UniProtKB-UniRule"/>
</dbReference>
<dbReference type="GO" id="GO:0004756">
    <property type="term" value="F:selenide, water dikinase activity"/>
    <property type="evidence" value="ECO:0007669"/>
    <property type="project" value="UniProtKB-UniRule"/>
</dbReference>
<dbReference type="GO" id="GO:0016260">
    <property type="term" value="P:selenocysteine biosynthetic process"/>
    <property type="evidence" value="ECO:0007669"/>
    <property type="project" value="InterPro"/>
</dbReference>
<dbReference type="CDD" id="cd02195">
    <property type="entry name" value="SelD"/>
    <property type="match status" value="1"/>
</dbReference>
<dbReference type="FunFam" id="3.30.1330.10:FF:000003">
    <property type="entry name" value="Selenide, water dikinase"/>
    <property type="match status" value="1"/>
</dbReference>
<dbReference type="FunFam" id="3.90.650.10:FF:000004">
    <property type="entry name" value="Selenide, water dikinase"/>
    <property type="match status" value="1"/>
</dbReference>
<dbReference type="Gene3D" id="3.90.650.10">
    <property type="entry name" value="PurM-like C-terminal domain"/>
    <property type="match status" value="1"/>
</dbReference>
<dbReference type="Gene3D" id="3.30.1330.10">
    <property type="entry name" value="PurM-like, N-terminal domain"/>
    <property type="match status" value="1"/>
</dbReference>
<dbReference type="HAMAP" id="MF_00625">
    <property type="entry name" value="SelD"/>
    <property type="match status" value="1"/>
</dbReference>
<dbReference type="InterPro" id="IPR010918">
    <property type="entry name" value="PurM-like_C_dom"/>
</dbReference>
<dbReference type="InterPro" id="IPR036676">
    <property type="entry name" value="PurM-like_C_sf"/>
</dbReference>
<dbReference type="InterPro" id="IPR016188">
    <property type="entry name" value="PurM-like_N"/>
</dbReference>
<dbReference type="InterPro" id="IPR036921">
    <property type="entry name" value="PurM-like_N_sf"/>
</dbReference>
<dbReference type="InterPro" id="IPR023061">
    <property type="entry name" value="SelD_I"/>
</dbReference>
<dbReference type="InterPro" id="IPR004536">
    <property type="entry name" value="SPS/SelD"/>
</dbReference>
<dbReference type="NCBIfam" id="NF002098">
    <property type="entry name" value="PRK00943.1"/>
    <property type="match status" value="1"/>
</dbReference>
<dbReference type="NCBIfam" id="TIGR00476">
    <property type="entry name" value="selD"/>
    <property type="match status" value="1"/>
</dbReference>
<dbReference type="PANTHER" id="PTHR10256:SF0">
    <property type="entry name" value="INACTIVE SELENIDE, WATER DIKINASE-LIKE PROTEIN-RELATED"/>
    <property type="match status" value="1"/>
</dbReference>
<dbReference type="PANTHER" id="PTHR10256">
    <property type="entry name" value="SELENIDE, WATER DIKINASE"/>
    <property type="match status" value="1"/>
</dbReference>
<dbReference type="Pfam" id="PF00586">
    <property type="entry name" value="AIRS"/>
    <property type="match status" value="1"/>
</dbReference>
<dbReference type="Pfam" id="PF02769">
    <property type="entry name" value="AIRS_C"/>
    <property type="match status" value="1"/>
</dbReference>
<dbReference type="PIRSF" id="PIRSF036407">
    <property type="entry name" value="Selenphspht_syn"/>
    <property type="match status" value="1"/>
</dbReference>
<dbReference type="SUPFAM" id="SSF56042">
    <property type="entry name" value="PurM C-terminal domain-like"/>
    <property type="match status" value="1"/>
</dbReference>
<dbReference type="SUPFAM" id="SSF55326">
    <property type="entry name" value="PurM N-terminal domain-like"/>
    <property type="match status" value="1"/>
</dbReference>
<keyword id="KW-0067">ATP-binding</keyword>
<keyword id="KW-0418">Kinase</keyword>
<keyword id="KW-0460">Magnesium</keyword>
<keyword id="KW-0479">Metal-binding</keyword>
<keyword id="KW-0547">Nucleotide-binding</keyword>
<keyword id="KW-1185">Reference proteome</keyword>
<keyword id="KW-0711">Selenium</keyword>
<keyword id="KW-0712">Selenocysteine</keyword>
<keyword id="KW-0808">Transferase</keyword>
<evidence type="ECO:0000255" key="1"/>
<evidence type="ECO:0000255" key="2">
    <source>
        <dbReference type="HAMAP-Rule" id="MF_00625"/>
    </source>
</evidence>
<evidence type="ECO:0000305" key="3"/>
<reference key="1">
    <citation type="submission" date="2003-06" db="EMBL/GenBank/DDBJ databases">
        <title>The complete genome sequence of Haemophilus ducreyi.</title>
        <authorList>
            <person name="Munson R.S. Jr."/>
            <person name="Ray W.C."/>
            <person name="Mahairas G."/>
            <person name="Sabo P."/>
            <person name="Mungur R."/>
            <person name="Johnson L."/>
            <person name="Nguyen D."/>
            <person name="Wang J."/>
            <person name="Forst C."/>
            <person name="Hood L."/>
        </authorList>
    </citation>
    <scope>NUCLEOTIDE SEQUENCE [LARGE SCALE GENOMIC DNA]</scope>
    <source>
        <strain>35000HP / ATCC 700724</strain>
    </source>
</reference>
<proteinExistence type="inferred from homology"/>
<accession>Q7VNG0</accession>